<gene>
    <name type="primary">smim12-a</name>
</gene>
<keyword id="KW-0472">Membrane</keyword>
<keyword id="KW-1185">Reference proteome</keyword>
<keyword id="KW-0812">Transmembrane</keyword>
<keyword id="KW-1133">Transmembrane helix</keyword>
<name>SI12A_XENLA</name>
<organism>
    <name type="scientific">Xenopus laevis</name>
    <name type="common">African clawed frog</name>
    <dbReference type="NCBI Taxonomy" id="8355"/>
    <lineage>
        <taxon>Eukaryota</taxon>
        <taxon>Metazoa</taxon>
        <taxon>Chordata</taxon>
        <taxon>Craniata</taxon>
        <taxon>Vertebrata</taxon>
        <taxon>Euteleostomi</taxon>
        <taxon>Amphibia</taxon>
        <taxon>Batrachia</taxon>
        <taxon>Anura</taxon>
        <taxon>Pipoidea</taxon>
        <taxon>Pipidae</taxon>
        <taxon>Xenopodinae</taxon>
        <taxon>Xenopus</taxon>
        <taxon>Xenopus</taxon>
    </lineage>
</organism>
<sequence>MWPVLWAAARTYAPYITFPVAFVVGAVGYQLEWFIRGTPEHPVEEQSIQEKREERTLQETMGKDVTQVISLKEKLEFTPKAVLNRNRQEKS</sequence>
<reference key="1">
    <citation type="submission" date="2006-12" db="EMBL/GenBank/DDBJ databases">
        <authorList>
            <consortium name="NIH - Xenopus Gene Collection (XGC) project"/>
        </authorList>
    </citation>
    <scope>NUCLEOTIDE SEQUENCE [LARGE SCALE MRNA]</scope>
    <source>
        <tissue>Forelimb</tissue>
        <tissue>Hind limb</tissue>
    </source>
</reference>
<accession>A1L2P2</accession>
<evidence type="ECO:0000255" key="1"/>
<evidence type="ECO:0000305" key="2"/>
<feature type="chain" id="PRO_0000414325" description="Small integral membrane protein 12-A">
    <location>
        <begin position="1"/>
        <end position="91"/>
    </location>
</feature>
<feature type="transmembrane region" description="Helical" evidence="1">
    <location>
        <begin position="12"/>
        <end position="34"/>
    </location>
</feature>
<comment type="subcellular location">
    <subcellularLocation>
        <location evidence="2">Membrane</location>
        <topology evidence="2">Single-pass membrane protein</topology>
    </subcellularLocation>
</comment>
<comment type="similarity">
    <text evidence="2">Belongs to the SMIM12 family.</text>
</comment>
<proteinExistence type="inferred from homology"/>
<protein>
    <recommendedName>
        <fullName>Small integral membrane protein 12-A</fullName>
    </recommendedName>
</protein>
<dbReference type="EMBL" id="BC129636">
    <property type="protein sequence ID" value="AAI29637.1"/>
    <property type="molecule type" value="mRNA"/>
</dbReference>
<dbReference type="SMR" id="A1L2P2"/>
<dbReference type="DNASU" id="100036908"/>
<dbReference type="GeneID" id="100036908"/>
<dbReference type="KEGG" id="xla:100036908"/>
<dbReference type="AGR" id="Xenbase:XB-GENE-6255874"/>
<dbReference type="CTD" id="100036908"/>
<dbReference type="Xenbase" id="XB-GENE-6255874">
    <property type="gene designation" value="smim12.S"/>
</dbReference>
<dbReference type="OMA" id="YHLEWFL"/>
<dbReference type="OrthoDB" id="10052506at2759"/>
<dbReference type="Proteomes" id="UP000186698">
    <property type="component" value="Chromosome 2S"/>
</dbReference>
<dbReference type="Bgee" id="100036908">
    <property type="expression patterns" value="Expressed in oocyte and 19 other cell types or tissues"/>
</dbReference>
<dbReference type="GO" id="GO:0016020">
    <property type="term" value="C:membrane"/>
    <property type="evidence" value="ECO:0007669"/>
    <property type="project" value="UniProtKB-SubCell"/>
</dbReference>
<dbReference type="InterPro" id="IPR031933">
    <property type="entry name" value="UPF0767"/>
</dbReference>
<dbReference type="PANTHER" id="PTHR28599">
    <property type="entry name" value="SMALL INTEGRAL MEMBRANE PROTEIN 12"/>
    <property type="match status" value="1"/>
</dbReference>
<dbReference type="PANTHER" id="PTHR28599:SF1">
    <property type="entry name" value="SMALL INTEGRAL MEMBRANE PROTEIN 12"/>
    <property type="match status" value="1"/>
</dbReference>
<dbReference type="Pfam" id="PF15990">
    <property type="entry name" value="UPF0767"/>
    <property type="match status" value="1"/>
</dbReference>